<keyword id="KW-0028">Amino-acid biosynthesis</keyword>
<keyword id="KW-0170">Cobalt</keyword>
<keyword id="KW-0220">Diaminopimelate biosynthesis</keyword>
<keyword id="KW-0378">Hydrolase</keyword>
<keyword id="KW-0457">Lysine biosynthesis</keyword>
<keyword id="KW-0479">Metal-binding</keyword>
<keyword id="KW-1185">Reference proteome</keyword>
<keyword id="KW-0862">Zinc</keyword>
<accession>Q62JB1</accession>
<name>DAPE_BURMA</name>
<organism>
    <name type="scientific">Burkholderia mallei (strain ATCC 23344)</name>
    <dbReference type="NCBI Taxonomy" id="243160"/>
    <lineage>
        <taxon>Bacteria</taxon>
        <taxon>Pseudomonadati</taxon>
        <taxon>Pseudomonadota</taxon>
        <taxon>Betaproteobacteria</taxon>
        <taxon>Burkholderiales</taxon>
        <taxon>Burkholderiaceae</taxon>
        <taxon>Burkholderia</taxon>
        <taxon>pseudomallei group</taxon>
    </lineage>
</organism>
<evidence type="ECO:0000255" key="1">
    <source>
        <dbReference type="HAMAP-Rule" id="MF_01690"/>
    </source>
</evidence>
<proteinExistence type="inferred from homology"/>
<feature type="chain" id="PRO_0000375501" description="Succinyl-diaminopimelate desuccinylase">
    <location>
        <begin position="1"/>
        <end position="379"/>
    </location>
</feature>
<feature type="active site" evidence="1">
    <location>
        <position position="72"/>
    </location>
</feature>
<feature type="active site" description="Proton acceptor" evidence="1">
    <location>
        <position position="137"/>
    </location>
</feature>
<feature type="binding site" evidence="1">
    <location>
        <position position="70"/>
    </location>
    <ligand>
        <name>Zn(2+)</name>
        <dbReference type="ChEBI" id="CHEBI:29105"/>
        <label>1</label>
    </ligand>
</feature>
<feature type="binding site" evidence="1">
    <location>
        <position position="103"/>
    </location>
    <ligand>
        <name>Zn(2+)</name>
        <dbReference type="ChEBI" id="CHEBI:29105"/>
        <label>1</label>
    </ligand>
</feature>
<feature type="binding site" evidence="1">
    <location>
        <position position="103"/>
    </location>
    <ligand>
        <name>Zn(2+)</name>
        <dbReference type="ChEBI" id="CHEBI:29105"/>
        <label>2</label>
    </ligand>
</feature>
<feature type="binding site" evidence="1">
    <location>
        <position position="138"/>
    </location>
    <ligand>
        <name>Zn(2+)</name>
        <dbReference type="ChEBI" id="CHEBI:29105"/>
        <label>2</label>
    </ligand>
</feature>
<feature type="binding site" evidence="1">
    <location>
        <position position="166"/>
    </location>
    <ligand>
        <name>Zn(2+)</name>
        <dbReference type="ChEBI" id="CHEBI:29105"/>
        <label>1</label>
    </ligand>
</feature>
<feature type="binding site" evidence="1">
    <location>
        <position position="352"/>
    </location>
    <ligand>
        <name>Zn(2+)</name>
        <dbReference type="ChEBI" id="CHEBI:29105"/>
        <label>2</label>
    </ligand>
</feature>
<reference key="1">
    <citation type="journal article" date="2004" name="Proc. Natl. Acad. Sci. U.S.A.">
        <title>Structural flexibility in the Burkholderia mallei genome.</title>
        <authorList>
            <person name="Nierman W.C."/>
            <person name="DeShazer D."/>
            <person name="Kim H.S."/>
            <person name="Tettelin H."/>
            <person name="Nelson K.E."/>
            <person name="Feldblyum T.V."/>
            <person name="Ulrich R.L."/>
            <person name="Ronning C.M."/>
            <person name="Brinkac L.M."/>
            <person name="Daugherty S.C."/>
            <person name="Davidsen T.D."/>
            <person name="DeBoy R.T."/>
            <person name="Dimitrov G."/>
            <person name="Dodson R.J."/>
            <person name="Durkin A.S."/>
            <person name="Gwinn M.L."/>
            <person name="Haft D.H."/>
            <person name="Khouri H.M."/>
            <person name="Kolonay J.F."/>
            <person name="Madupu R."/>
            <person name="Mohammoud Y."/>
            <person name="Nelson W.C."/>
            <person name="Radune D."/>
            <person name="Romero C.M."/>
            <person name="Sarria S."/>
            <person name="Selengut J."/>
            <person name="Shamblin C."/>
            <person name="Sullivan S.A."/>
            <person name="White O."/>
            <person name="Yu Y."/>
            <person name="Zafar N."/>
            <person name="Zhou L."/>
            <person name="Fraser C.M."/>
        </authorList>
    </citation>
    <scope>NUCLEOTIDE SEQUENCE [LARGE SCALE GENOMIC DNA]</scope>
    <source>
        <strain>ATCC 23344</strain>
    </source>
</reference>
<gene>
    <name evidence="1" type="primary">dapE</name>
    <name type="ordered locus">BMA1568</name>
</gene>
<dbReference type="EC" id="3.5.1.18" evidence="1"/>
<dbReference type="EMBL" id="CP000010">
    <property type="protein sequence ID" value="AAU47912.1"/>
    <property type="molecule type" value="Genomic_DNA"/>
</dbReference>
<dbReference type="RefSeq" id="WP_004191377.1">
    <property type="nucleotide sequence ID" value="NC_006348.1"/>
</dbReference>
<dbReference type="RefSeq" id="YP_103208.1">
    <property type="nucleotide sequence ID" value="NC_006348.1"/>
</dbReference>
<dbReference type="SMR" id="Q62JB1"/>
<dbReference type="GeneID" id="92979293"/>
<dbReference type="KEGG" id="bma:BMA1568"/>
<dbReference type="PATRIC" id="fig|243160.12.peg.1615"/>
<dbReference type="eggNOG" id="COG0624">
    <property type="taxonomic scope" value="Bacteria"/>
</dbReference>
<dbReference type="HOGENOM" id="CLU_021802_4_0_4"/>
<dbReference type="UniPathway" id="UPA00034">
    <property type="reaction ID" value="UER00021"/>
</dbReference>
<dbReference type="Proteomes" id="UP000006693">
    <property type="component" value="Chromosome 1"/>
</dbReference>
<dbReference type="GO" id="GO:0008777">
    <property type="term" value="F:acetylornithine deacetylase activity"/>
    <property type="evidence" value="ECO:0007669"/>
    <property type="project" value="TreeGrafter"/>
</dbReference>
<dbReference type="GO" id="GO:0050897">
    <property type="term" value="F:cobalt ion binding"/>
    <property type="evidence" value="ECO:0007669"/>
    <property type="project" value="UniProtKB-UniRule"/>
</dbReference>
<dbReference type="GO" id="GO:0009014">
    <property type="term" value="F:succinyl-diaminopimelate desuccinylase activity"/>
    <property type="evidence" value="ECO:0007669"/>
    <property type="project" value="UniProtKB-UniRule"/>
</dbReference>
<dbReference type="GO" id="GO:0008270">
    <property type="term" value="F:zinc ion binding"/>
    <property type="evidence" value="ECO:0007669"/>
    <property type="project" value="UniProtKB-UniRule"/>
</dbReference>
<dbReference type="GO" id="GO:0019877">
    <property type="term" value="P:diaminopimelate biosynthetic process"/>
    <property type="evidence" value="ECO:0007669"/>
    <property type="project" value="UniProtKB-UniRule"/>
</dbReference>
<dbReference type="GO" id="GO:0006526">
    <property type="term" value="P:L-arginine biosynthetic process"/>
    <property type="evidence" value="ECO:0007669"/>
    <property type="project" value="TreeGrafter"/>
</dbReference>
<dbReference type="GO" id="GO:0009089">
    <property type="term" value="P:lysine biosynthetic process via diaminopimelate"/>
    <property type="evidence" value="ECO:0007669"/>
    <property type="project" value="UniProtKB-UniRule"/>
</dbReference>
<dbReference type="CDD" id="cd03891">
    <property type="entry name" value="M20_DapE_proteobac"/>
    <property type="match status" value="1"/>
</dbReference>
<dbReference type="FunFam" id="3.30.70.360:FF:000011">
    <property type="entry name" value="Succinyl-diaminopimelate desuccinylase"/>
    <property type="match status" value="1"/>
</dbReference>
<dbReference type="FunFam" id="3.40.630.10:FF:000005">
    <property type="entry name" value="Succinyl-diaminopimelate desuccinylase"/>
    <property type="match status" value="1"/>
</dbReference>
<dbReference type="Gene3D" id="3.40.630.10">
    <property type="entry name" value="Zn peptidases"/>
    <property type="match status" value="2"/>
</dbReference>
<dbReference type="HAMAP" id="MF_01690">
    <property type="entry name" value="DapE"/>
    <property type="match status" value="1"/>
</dbReference>
<dbReference type="InterPro" id="IPR001261">
    <property type="entry name" value="ArgE/DapE_CS"/>
</dbReference>
<dbReference type="InterPro" id="IPR036264">
    <property type="entry name" value="Bact_exopeptidase_dim_dom"/>
</dbReference>
<dbReference type="InterPro" id="IPR005941">
    <property type="entry name" value="DapE_proteobac"/>
</dbReference>
<dbReference type="InterPro" id="IPR002933">
    <property type="entry name" value="Peptidase_M20"/>
</dbReference>
<dbReference type="InterPro" id="IPR011650">
    <property type="entry name" value="Peptidase_M20_dimer"/>
</dbReference>
<dbReference type="InterPro" id="IPR050072">
    <property type="entry name" value="Peptidase_M20A"/>
</dbReference>
<dbReference type="NCBIfam" id="TIGR01246">
    <property type="entry name" value="dapE_proteo"/>
    <property type="match status" value="1"/>
</dbReference>
<dbReference type="NCBIfam" id="NF009557">
    <property type="entry name" value="PRK13009.1"/>
    <property type="match status" value="1"/>
</dbReference>
<dbReference type="PANTHER" id="PTHR43808">
    <property type="entry name" value="ACETYLORNITHINE DEACETYLASE"/>
    <property type="match status" value="1"/>
</dbReference>
<dbReference type="PANTHER" id="PTHR43808:SF31">
    <property type="entry name" value="N-ACETYL-L-CITRULLINE DEACETYLASE"/>
    <property type="match status" value="1"/>
</dbReference>
<dbReference type="Pfam" id="PF07687">
    <property type="entry name" value="M20_dimer"/>
    <property type="match status" value="1"/>
</dbReference>
<dbReference type="Pfam" id="PF01546">
    <property type="entry name" value="Peptidase_M20"/>
    <property type="match status" value="1"/>
</dbReference>
<dbReference type="SUPFAM" id="SSF55031">
    <property type="entry name" value="Bacterial exopeptidase dimerisation domain"/>
    <property type="match status" value="1"/>
</dbReference>
<dbReference type="SUPFAM" id="SSF53187">
    <property type="entry name" value="Zn-dependent exopeptidases"/>
    <property type="match status" value="1"/>
</dbReference>
<dbReference type="PROSITE" id="PS00758">
    <property type="entry name" value="ARGE_DAPE_CPG2_1"/>
    <property type="match status" value="1"/>
</dbReference>
<comment type="function">
    <text evidence="1">Catalyzes the hydrolysis of N-succinyl-L,L-diaminopimelic acid (SDAP), forming succinate and LL-2,6-diaminopimelate (DAP), an intermediate involved in the bacterial biosynthesis of lysine and meso-diaminopimelic acid, an essential component of bacterial cell walls.</text>
</comment>
<comment type="catalytic activity">
    <reaction evidence="1">
        <text>N-succinyl-(2S,6S)-2,6-diaminopimelate + H2O = (2S,6S)-2,6-diaminopimelate + succinate</text>
        <dbReference type="Rhea" id="RHEA:22608"/>
        <dbReference type="ChEBI" id="CHEBI:15377"/>
        <dbReference type="ChEBI" id="CHEBI:30031"/>
        <dbReference type="ChEBI" id="CHEBI:57609"/>
        <dbReference type="ChEBI" id="CHEBI:58087"/>
        <dbReference type="EC" id="3.5.1.18"/>
    </reaction>
</comment>
<comment type="cofactor">
    <cofactor evidence="1">
        <name>Zn(2+)</name>
        <dbReference type="ChEBI" id="CHEBI:29105"/>
    </cofactor>
    <cofactor evidence="1">
        <name>Co(2+)</name>
        <dbReference type="ChEBI" id="CHEBI:48828"/>
    </cofactor>
    <text evidence="1">Binds 2 Zn(2+) or Co(2+) ions per subunit.</text>
</comment>
<comment type="pathway">
    <text evidence="1">Amino-acid biosynthesis; L-lysine biosynthesis via DAP pathway; LL-2,6-diaminopimelate from (S)-tetrahydrodipicolinate (succinylase route): step 3/3.</text>
</comment>
<comment type="subunit">
    <text evidence="1">Homodimer.</text>
</comment>
<comment type="similarity">
    <text evidence="1">Belongs to the peptidase M20A family. DapE subfamily.</text>
</comment>
<protein>
    <recommendedName>
        <fullName evidence="1">Succinyl-diaminopimelate desuccinylase</fullName>
        <shortName evidence="1">SDAP desuccinylase</shortName>
        <ecNumber evidence="1">3.5.1.18</ecNumber>
    </recommendedName>
    <alternativeName>
        <fullName evidence="1">N-succinyl-LL-2,6-diaminoheptanedioate amidohydrolase</fullName>
    </alternativeName>
</protein>
<sequence>MSATLALTEQLIARASVTPDDQHCQQLMIERLAALGFECETIASHGVTNFWAVKRGTAGRAGKLLAFAGHTDVVPTGPLEQWRSPPFVPTHRDGKLYGRGAADMKTSLAGFVVAAEEFVAAHPQHRGSIGFLITSDEEGPATDGTVKVVEALAARGERLDYCIVGEPTSTATLGDVVKNGRRGSMSGELVVKGVQGHIAYPHLAKNPIHLLAPALAELAAEQWDEGNEYFPPTTWQVSNLRAGTGATNVIPGHADLLFNFRFSTASTVEGLQARVHAILDRHGLDYTLNWSVSGLPFLTPRGELSNALDAAIRAETGVSPELSTTGGTSDGRFIARICPQVIEFGPPNASIHKIDEHIDVRFVDPLKNVYRRVLEQLIA</sequence>